<gene>
    <name evidence="1" type="primary">ppc</name>
    <name type="ordered locus">PA3687</name>
</gene>
<reference key="1">
    <citation type="journal article" date="2000" name="Nature">
        <title>Complete genome sequence of Pseudomonas aeruginosa PAO1, an opportunistic pathogen.</title>
        <authorList>
            <person name="Stover C.K."/>
            <person name="Pham X.-Q.T."/>
            <person name="Erwin A.L."/>
            <person name="Mizoguchi S.D."/>
            <person name="Warrener P."/>
            <person name="Hickey M.J."/>
            <person name="Brinkman F.S.L."/>
            <person name="Hufnagle W.O."/>
            <person name="Kowalik D.J."/>
            <person name="Lagrou M."/>
            <person name="Garber R.L."/>
            <person name="Goltry L."/>
            <person name="Tolentino E."/>
            <person name="Westbrock-Wadman S."/>
            <person name="Yuan Y."/>
            <person name="Brody L.L."/>
            <person name="Coulter S.N."/>
            <person name="Folger K.R."/>
            <person name="Kas A."/>
            <person name="Larbig K."/>
            <person name="Lim R.M."/>
            <person name="Smith K.A."/>
            <person name="Spencer D.H."/>
            <person name="Wong G.K.-S."/>
            <person name="Wu Z."/>
            <person name="Paulsen I.T."/>
            <person name="Reizer J."/>
            <person name="Saier M.H. Jr."/>
            <person name="Hancock R.E.W."/>
            <person name="Lory S."/>
            <person name="Olson M.V."/>
        </authorList>
    </citation>
    <scope>NUCLEOTIDE SEQUENCE [LARGE SCALE GENOMIC DNA]</scope>
    <source>
        <strain>ATCC 15692 / DSM 22644 / CIP 104116 / JCM 14847 / LMG 12228 / 1C / PRS 101 / PAO1</strain>
    </source>
</reference>
<evidence type="ECO:0000255" key="1">
    <source>
        <dbReference type="HAMAP-Rule" id="MF_00595"/>
    </source>
</evidence>
<protein>
    <recommendedName>
        <fullName evidence="1">Phosphoenolpyruvate carboxylase</fullName>
        <shortName evidence="1">PEPC</shortName>
        <shortName evidence="1">PEPCase</shortName>
        <ecNumber evidence="1">4.1.1.31</ecNumber>
    </recommendedName>
</protein>
<comment type="function">
    <text evidence="1">Forms oxaloacetate, a four-carbon dicarboxylic acid source for the tricarboxylic acid cycle.</text>
</comment>
<comment type="catalytic activity">
    <reaction evidence="1">
        <text>oxaloacetate + phosphate = phosphoenolpyruvate + hydrogencarbonate</text>
        <dbReference type="Rhea" id="RHEA:28370"/>
        <dbReference type="ChEBI" id="CHEBI:16452"/>
        <dbReference type="ChEBI" id="CHEBI:17544"/>
        <dbReference type="ChEBI" id="CHEBI:43474"/>
        <dbReference type="ChEBI" id="CHEBI:58702"/>
        <dbReference type="EC" id="4.1.1.31"/>
    </reaction>
</comment>
<comment type="cofactor">
    <cofactor evidence="1">
        <name>Mg(2+)</name>
        <dbReference type="ChEBI" id="CHEBI:18420"/>
    </cofactor>
</comment>
<comment type="similarity">
    <text evidence="1">Belongs to the PEPCase type 1 family.</text>
</comment>
<dbReference type="EC" id="4.1.1.31" evidence="1"/>
<dbReference type="EMBL" id="AE004091">
    <property type="protein sequence ID" value="AAG07075.1"/>
    <property type="molecule type" value="Genomic_DNA"/>
</dbReference>
<dbReference type="PIR" id="H83184">
    <property type="entry name" value="H83184"/>
</dbReference>
<dbReference type="RefSeq" id="NP_252377.1">
    <property type="nucleotide sequence ID" value="NC_002516.2"/>
</dbReference>
<dbReference type="RefSeq" id="WP_003113850.1">
    <property type="nucleotide sequence ID" value="NZ_QZGE01000001.1"/>
</dbReference>
<dbReference type="SMR" id="Q9HXV3"/>
<dbReference type="FunCoup" id="Q9HXV3">
    <property type="interactions" value="430"/>
</dbReference>
<dbReference type="STRING" id="208964.PA3687"/>
<dbReference type="PaxDb" id="208964-PA3687"/>
<dbReference type="GeneID" id="879083"/>
<dbReference type="KEGG" id="pae:PA3687"/>
<dbReference type="PATRIC" id="fig|208964.12.peg.3856"/>
<dbReference type="PseudoCAP" id="PA3687"/>
<dbReference type="HOGENOM" id="CLU_006557_2_0_6"/>
<dbReference type="InParanoid" id="Q9HXV3"/>
<dbReference type="OrthoDB" id="9768133at2"/>
<dbReference type="PhylomeDB" id="Q9HXV3"/>
<dbReference type="BioCyc" id="PAER208964:G1FZ6-3757-MONOMER"/>
<dbReference type="Proteomes" id="UP000002438">
    <property type="component" value="Chromosome"/>
</dbReference>
<dbReference type="GO" id="GO:0005829">
    <property type="term" value="C:cytosol"/>
    <property type="evidence" value="ECO:0000318"/>
    <property type="project" value="GO_Central"/>
</dbReference>
<dbReference type="GO" id="GO:0000287">
    <property type="term" value="F:magnesium ion binding"/>
    <property type="evidence" value="ECO:0007669"/>
    <property type="project" value="UniProtKB-UniRule"/>
</dbReference>
<dbReference type="GO" id="GO:0008964">
    <property type="term" value="F:phosphoenolpyruvate carboxylase activity"/>
    <property type="evidence" value="ECO:0000318"/>
    <property type="project" value="GO_Central"/>
</dbReference>
<dbReference type="GO" id="GO:0015977">
    <property type="term" value="P:carbon fixation"/>
    <property type="evidence" value="ECO:0007669"/>
    <property type="project" value="UniProtKB-UniRule"/>
</dbReference>
<dbReference type="GO" id="GO:0006107">
    <property type="term" value="P:oxaloacetate metabolic process"/>
    <property type="evidence" value="ECO:0007669"/>
    <property type="project" value="UniProtKB-UniRule"/>
</dbReference>
<dbReference type="GO" id="GO:0006099">
    <property type="term" value="P:tricarboxylic acid cycle"/>
    <property type="evidence" value="ECO:0007669"/>
    <property type="project" value="InterPro"/>
</dbReference>
<dbReference type="Gene3D" id="1.20.1440.90">
    <property type="entry name" value="Phosphoenolpyruvate/pyruvate domain"/>
    <property type="match status" value="1"/>
</dbReference>
<dbReference type="HAMAP" id="MF_00595">
    <property type="entry name" value="PEPcase_type1"/>
    <property type="match status" value="1"/>
</dbReference>
<dbReference type="InterPro" id="IPR021135">
    <property type="entry name" value="PEP_COase"/>
</dbReference>
<dbReference type="InterPro" id="IPR022805">
    <property type="entry name" value="PEP_COase_bac/pln-type"/>
</dbReference>
<dbReference type="InterPro" id="IPR018129">
    <property type="entry name" value="PEP_COase_Lys_AS"/>
</dbReference>
<dbReference type="InterPro" id="IPR033129">
    <property type="entry name" value="PEPCASE_His_AS"/>
</dbReference>
<dbReference type="InterPro" id="IPR015813">
    <property type="entry name" value="Pyrv/PenolPyrv_kinase-like_dom"/>
</dbReference>
<dbReference type="NCBIfam" id="NF000584">
    <property type="entry name" value="PRK00009.1"/>
    <property type="match status" value="1"/>
</dbReference>
<dbReference type="PANTHER" id="PTHR30523">
    <property type="entry name" value="PHOSPHOENOLPYRUVATE CARBOXYLASE"/>
    <property type="match status" value="1"/>
</dbReference>
<dbReference type="PANTHER" id="PTHR30523:SF6">
    <property type="entry name" value="PHOSPHOENOLPYRUVATE CARBOXYLASE"/>
    <property type="match status" value="1"/>
</dbReference>
<dbReference type="Pfam" id="PF00311">
    <property type="entry name" value="PEPcase"/>
    <property type="match status" value="1"/>
</dbReference>
<dbReference type="PRINTS" id="PR00150">
    <property type="entry name" value="PEPCARBXLASE"/>
</dbReference>
<dbReference type="SUPFAM" id="SSF51621">
    <property type="entry name" value="Phosphoenolpyruvate/pyruvate domain"/>
    <property type="match status" value="1"/>
</dbReference>
<dbReference type="PROSITE" id="PS00781">
    <property type="entry name" value="PEPCASE_1"/>
    <property type="match status" value="1"/>
</dbReference>
<dbReference type="PROSITE" id="PS00393">
    <property type="entry name" value="PEPCASE_2"/>
    <property type="match status" value="1"/>
</dbReference>
<sequence length="878" mass="97840">MPEIDARLREDVHQLGELLGDTIREQYGPRFLDKIELIRKGAKAARRGSAEGAQQLTATLDGLEEDELLPVARAFNQFLNLANIAEQYHRIRRRRPNEPEPFENLVLEELLGRLKDAGHAPGQLARQLAGLEIELVLTAHPTEVARRTLIQKYDAITAQLAAKDHADLLPEERSRIQQRLQRLVAEAWHTDEIRKVRPTPVDEAKWGFAVIEHSLWQALPNVLRHVDEVLLRSTGERLPLTAAPLRFASWMGGDRDGNPNVTASVTREVLLLARWMAADLYLRDIDRLAAELSMQQASPQLLARVGDSAEPYRALLKQLRERLRVTRNWTHQALAGEVPAAEGVLEHNRDLVEPLQLCHESLHACGMGVIADGALLDCLRRAATFGLFLVRLDVRQDSARHAAALSEITEYLELGSYDEWDEKTRLEFLLEELNSRRPLLPAHYQPSADTAEVLATCRAIAAAPPASLGSYVISMAGQPSDVLAVQLLLKESGVDWPMRVVPLFETLDDLDNAGPCMERLLTLPGYRSRLSGVQEVMIGYSDSAKDAGTLTAAWAQYRAQEKLVEICRQHEVELLLFHGRGGTVGRGGGPAHAAILSQPPGSVAGRFRVTEQGEMIRFKFGLPDIAEQNLNLYLAAVLEATLMPPPAPEPAWRAQMDRLAKDALLAYRRVVRDDPQFVEYFRLATPEQELGRLPLGSRPAKRREGGVESLRAIPWIFAWTQTRLMLPAWLGWETALLNAIERGEGALLGQMREQWPFFTTRIDMLEMVLAKADADIARLYDERLVPLELRPLGRRLRDLLSQAVRVVLGLTGQSLLLAHASETRESISVRNSYLDPLHLLQAELLARSRRCRGDACGGLEQALLVTVAGVAAGLRNTG</sequence>
<feature type="chain" id="PRO_0000166613" description="Phosphoenolpyruvate carboxylase">
    <location>
        <begin position="1"/>
        <end position="878"/>
    </location>
</feature>
<feature type="active site" evidence="1">
    <location>
        <position position="140"/>
    </location>
</feature>
<feature type="active site" evidence="1">
    <location>
        <position position="545"/>
    </location>
</feature>
<accession>Q9HXV3</accession>
<keyword id="KW-0120">Carbon dioxide fixation</keyword>
<keyword id="KW-0456">Lyase</keyword>
<keyword id="KW-0460">Magnesium</keyword>
<keyword id="KW-1185">Reference proteome</keyword>
<organism>
    <name type="scientific">Pseudomonas aeruginosa (strain ATCC 15692 / DSM 22644 / CIP 104116 / JCM 14847 / LMG 12228 / 1C / PRS 101 / PAO1)</name>
    <dbReference type="NCBI Taxonomy" id="208964"/>
    <lineage>
        <taxon>Bacteria</taxon>
        <taxon>Pseudomonadati</taxon>
        <taxon>Pseudomonadota</taxon>
        <taxon>Gammaproteobacteria</taxon>
        <taxon>Pseudomonadales</taxon>
        <taxon>Pseudomonadaceae</taxon>
        <taxon>Pseudomonas</taxon>
    </lineage>
</organism>
<proteinExistence type="inferred from homology"/>
<name>CAPP_PSEAE</name>